<proteinExistence type="evidence at protein level"/>
<evidence type="ECO:0000250" key="1"/>
<evidence type="ECO:0000250" key="2">
    <source>
        <dbReference type="UniProtKB" id="O14730"/>
    </source>
</evidence>
<evidence type="ECO:0000256" key="3">
    <source>
        <dbReference type="SAM" id="MobiDB-lite"/>
    </source>
</evidence>
<evidence type="ECO:0000305" key="4"/>
<evidence type="ECO:0007744" key="5">
    <source>
    </source>
</evidence>
<evidence type="ECO:0007744" key="6">
    <source>
    </source>
</evidence>
<name>RIOK3_MOUSE</name>
<comment type="function">
    <text evidence="2">Involved in regulation of type I interferon (IFN)-dependent immune response which plays a critical role in the innate immune response against DNA and RNA viruses. May act as an adapter protein essential for the recruitment of TBK1 to IRF3. Phosphorylates IFIH1 on 'Ser-828' interfering with IFIH1 filament assembly on long dsRNA and resulting in attenuated IFIH1-signaling. Can inhibit CASP10 isoform 7-mediated activation of the NF-kappaB signaling pathway. May play a role in the biogenesis of the 40S ribosomal subunit. Involved in the processing of 21S pre-rRNA to the mature 18S rRNA.</text>
</comment>
<comment type="catalytic activity">
    <reaction>
        <text>L-seryl-[protein] + ATP = O-phospho-L-seryl-[protein] + ADP + H(+)</text>
        <dbReference type="Rhea" id="RHEA:17989"/>
        <dbReference type="Rhea" id="RHEA-COMP:9863"/>
        <dbReference type="Rhea" id="RHEA-COMP:11604"/>
        <dbReference type="ChEBI" id="CHEBI:15378"/>
        <dbReference type="ChEBI" id="CHEBI:29999"/>
        <dbReference type="ChEBI" id="CHEBI:30616"/>
        <dbReference type="ChEBI" id="CHEBI:83421"/>
        <dbReference type="ChEBI" id="CHEBI:456216"/>
        <dbReference type="EC" id="2.7.11.1"/>
    </reaction>
</comment>
<comment type="catalytic activity">
    <reaction>
        <text>L-threonyl-[protein] + ATP = O-phospho-L-threonyl-[protein] + ADP + H(+)</text>
        <dbReference type="Rhea" id="RHEA:46608"/>
        <dbReference type="Rhea" id="RHEA-COMP:11060"/>
        <dbReference type="Rhea" id="RHEA-COMP:11605"/>
        <dbReference type="ChEBI" id="CHEBI:15378"/>
        <dbReference type="ChEBI" id="CHEBI:30013"/>
        <dbReference type="ChEBI" id="CHEBI:30616"/>
        <dbReference type="ChEBI" id="CHEBI:61977"/>
        <dbReference type="ChEBI" id="CHEBI:456216"/>
        <dbReference type="EC" id="2.7.11.1"/>
    </reaction>
</comment>
<comment type="cofactor">
    <cofactor evidence="4">
        <name>Mg(2+)</name>
        <dbReference type="ChEBI" id="CHEBI:18420"/>
    </cofactor>
</comment>
<comment type="subunit">
    <text evidence="2">Interacts with CASP10. Interacts with IRF3; RIOK3 probably mediates the interaction of TBK1 with IRF3. Associated with 40S pre-ribosomal particles.</text>
</comment>
<comment type="subcellular location">
    <subcellularLocation>
        <location evidence="2">Cytoplasm</location>
    </subcellularLocation>
</comment>
<comment type="PTM">
    <text evidence="2">Autophosphorylated (in vitro).</text>
</comment>
<comment type="similarity">
    <text evidence="4">Belongs to the protein kinase superfamily. RIO-type Ser/Thr kinase family.</text>
</comment>
<protein>
    <recommendedName>
        <fullName>Serine/threonine-protein kinase RIO3</fullName>
        <ecNumber>2.7.11.1</ecNumber>
    </recommendedName>
    <alternativeName>
        <fullName>RIO kinase 3</fullName>
    </alternativeName>
</protein>
<dbReference type="EC" id="2.7.11.1"/>
<dbReference type="EMBL" id="AK004748">
    <property type="protein sequence ID" value="BAB23529.1"/>
    <property type="molecule type" value="mRNA"/>
</dbReference>
<dbReference type="EMBL" id="AK147074">
    <property type="protein sequence ID" value="BAE27655.1"/>
    <property type="molecule type" value="mRNA"/>
</dbReference>
<dbReference type="EMBL" id="BC033271">
    <property type="protein sequence ID" value="AAH33271.1"/>
    <property type="molecule type" value="mRNA"/>
</dbReference>
<dbReference type="EMBL" id="CH466622">
    <property type="protein sequence ID" value="EDL01557.1"/>
    <property type="molecule type" value="Genomic_DNA"/>
</dbReference>
<dbReference type="CCDS" id="CCDS29062.1"/>
<dbReference type="RefSeq" id="NP_077144.2">
    <property type="nucleotide sequence ID" value="NM_024182.4"/>
</dbReference>
<dbReference type="SMR" id="Q9DBU3"/>
<dbReference type="BioGRID" id="211783">
    <property type="interactions" value="2"/>
</dbReference>
<dbReference type="FunCoup" id="Q9DBU3">
    <property type="interactions" value="493"/>
</dbReference>
<dbReference type="STRING" id="10090.ENSMUSP00000025270"/>
<dbReference type="iPTMnet" id="Q9DBU3"/>
<dbReference type="PhosphoSitePlus" id="Q9DBU3"/>
<dbReference type="jPOST" id="Q9DBU3"/>
<dbReference type="PaxDb" id="10090-ENSMUSP00000025270"/>
<dbReference type="ProteomicsDB" id="253291"/>
<dbReference type="Pumba" id="Q9DBU3"/>
<dbReference type="Antibodypedia" id="967">
    <property type="antibodies" value="203 antibodies from 31 providers"/>
</dbReference>
<dbReference type="DNASU" id="66878"/>
<dbReference type="Ensembl" id="ENSMUST00000025270.8">
    <property type="protein sequence ID" value="ENSMUSP00000025270.7"/>
    <property type="gene ID" value="ENSMUSG00000024404.8"/>
</dbReference>
<dbReference type="GeneID" id="66878"/>
<dbReference type="KEGG" id="mmu:66878"/>
<dbReference type="UCSC" id="uc008eby.1">
    <property type="organism name" value="mouse"/>
</dbReference>
<dbReference type="AGR" id="MGI:1914128"/>
<dbReference type="CTD" id="8780"/>
<dbReference type="MGI" id="MGI:1914128">
    <property type="gene designation" value="Riok3"/>
</dbReference>
<dbReference type="VEuPathDB" id="HostDB:ENSMUSG00000024404"/>
<dbReference type="eggNOG" id="KOG2269">
    <property type="taxonomic scope" value="Eukaryota"/>
</dbReference>
<dbReference type="GeneTree" id="ENSGT00940000157008"/>
<dbReference type="HOGENOM" id="CLU_018693_5_0_1"/>
<dbReference type="InParanoid" id="Q9DBU3"/>
<dbReference type="OMA" id="SKCPWGA"/>
<dbReference type="OrthoDB" id="205248at2759"/>
<dbReference type="PhylomeDB" id="Q9DBU3"/>
<dbReference type="TreeFam" id="TF105831"/>
<dbReference type="Reactome" id="R-MMU-6791226">
    <property type="pathway name" value="Major pathway of rRNA processing in the nucleolus and cytosol"/>
</dbReference>
<dbReference type="BioGRID-ORCS" id="66878">
    <property type="hits" value="4 hits in 80 CRISPR screens"/>
</dbReference>
<dbReference type="ChiTaRS" id="Riok3">
    <property type="organism name" value="mouse"/>
</dbReference>
<dbReference type="PRO" id="PR:Q9DBU3"/>
<dbReference type="Proteomes" id="UP000000589">
    <property type="component" value="Chromosome 18"/>
</dbReference>
<dbReference type="RNAct" id="Q9DBU3">
    <property type="molecule type" value="protein"/>
</dbReference>
<dbReference type="Bgee" id="ENSMUSG00000024404">
    <property type="expression patterns" value="Expressed in blood and 273 other cell types or tissues"/>
</dbReference>
<dbReference type="ExpressionAtlas" id="Q9DBU3">
    <property type="expression patterns" value="baseline and differential"/>
</dbReference>
<dbReference type="GO" id="GO:0005737">
    <property type="term" value="C:cytoplasm"/>
    <property type="evidence" value="ECO:0007669"/>
    <property type="project" value="UniProtKB-SubCell"/>
</dbReference>
<dbReference type="GO" id="GO:0030688">
    <property type="term" value="C:preribosome, small subunit precursor"/>
    <property type="evidence" value="ECO:0007669"/>
    <property type="project" value="Ensembl"/>
</dbReference>
<dbReference type="GO" id="GO:0005524">
    <property type="term" value="F:ATP binding"/>
    <property type="evidence" value="ECO:0007669"/>
    <property type="project" value="UniProtKB-KW"/>
</dbReference>
<dbReference type="GO" id="GO:0089720">
    <property type="term" value="F:caspase binding"/>
    <property type="evidence" value="ECO:0007669"/>
    <property type="project" value="Ensembl"/>
</dbReference>
<dbReference type="GO" id="GO:0046872">
    <property type="term" value="F:metal ion binding"/>
    <property type="evidence" value="ECO:0007669"/>
    <property type="project" value="UniProtKB-KW"/>
</dbReference>
<dbReference type="GO" id="GO:0106310">
    <property type="term" value="F:protein serine kinase activity"/>
    <property type="evidence" value="ECO:0007669"/>
    <property type="project" value="RHEA"/>
</dbReference>
<dbReference type="GO" id="GO:0004674">
    <property type="term" value="F:protein serine/threonine kinase activity"/>
    <property type="evidence" value="ECO:0007669"/>
    <property type="project" value="UniProtKB-KW"/>
</dbReference>
<dbReference type="GO" id="GO:1990786">
    <property type="term" value="P:cellular response to dsDNA"/>
    <property type="evidence" value="ECO:0007669"/>
    <property type="project" value="Ensembl"/>
</dbReference>
<dbReference type="GO" id="GO:0071359">
    <property type="term" value="P:cellular response to dsRNA"/>
    <property type="evidence" value="ECO:0007669"/>
    <property type="project" value="Ensembl"/>
</dbReference>
<dbReference type="GO" id="GO:0098586">
    <property type="term" value="P:cellular response to virus"/>
    <property type="evidence" value="ECO:0007669"/>
    <property type="project" value="Ensembl"/>
</dbReference>
<dbReference type="GO" id="GO:0051607">
    <property type="term" value="P:defense response to virus"/>
    <property type="evidence" value="ECO:0007669"/>
    <property type="project" value="UniProtKB-KW"/>
</dbReference>
<dbReference type="GO" id="GO:0045087">
    <property type="term" value="P:innate immune response"/>
    <property type="evidence" value="ECO:0007669"/>
    <property type="project" value="UniProtKB-KW"/>
</dbReference>
<dbReference type="GO" id="GO:0030490">
    <property type="term" value="P:maturation of SSU-rRNA"/>
    <property type="evidence" value="ECO:0007669"/>
    <property type="project" value="Ensembl"/>
</dbReference>
<dbReference type="GO" id="GO:0043124">
    <property type="term" value="P:negative regulation of canonical NF-kappaB signal transduction"/>
    <property type="evidence" value="ECO:0007669"/>
    <property type="project" value="Ensembl"/>
</dbReference>
<dbReference type="GO" id="GO:0039534">
    <property type="term" value="P:negative regulation of MDA-5 signaling pathway"/>
    <property type="evidence" value="ECO:0007669"/>
    <property type="project" value="Ensembl"/>
</dbReference>
<dbReference type="GO" id="GO:0031333">
    <property type="term" value="P:negative regulation of protein-containing complex assembly"/>
    <property type="evidence" value="ECO:0007669"/>
    <property type="project" value="Ensembl"/>
</dbReference>
<dbReference type="GO" id="GO:0045089">
    <property type="term" value="P:positive regulation of innate immune response"/>
    <property type="evidence" value="ECO:0007669"/>
    <property type="project" value="Ensembl"/>
</dbReference>
<dbReference type="GO" id="GO:0032728">
    <property type="term" value="P:positive regulation of interferon-beta production"/>
    <property type="evidence" value="ECO:0007669"/>
    <property type="project" value="Ensembl"/>
</dbReference>
<dbReference type="CDD" id="cd05146">
    <property type="entry name" value="RIO3_euk"/>
    <property type="match status" value="1"/>
</dbReference>
<dbReference type="FunFam" id="1.10.510.10:FF:000254">
    <property type="entry name" value="Serine/threonine-protein kinase RIO3"/>
    <property type="match status" value="1"/>
</dbReference>
<dbReference type="FunFam" id="3.30.200.20:FF:000200">
    <property type="entry name" value="Serine/threonine-protein kinase RIO3"/>
    <property type="match status" value="1"/>
</dbReference>
<dbReference type="Gene3D" id="3.30.200.20">
    <property type="entry name" value="Phosphorylase Kinase, domain 1"/>
    <property type="match status" value="1"/>
</dbReference>
<dbReference type="Gene3D" id="1.10.510.10">
    <property type="entry name" value="Transferase(Phosphotransferase) domain 1"/>
    <property type="match status" value="1"/>
</dbReference>
<dbReference type="InterPro" id="IPR011009">
    <property type="entry name" value="Kinase-like_dom_sf"/>
</dbReference>
<dbReference type="InterPro" id="IPR051272">
    <property type="entry name" value="RIO-type_Ser/Thr_kinase"/>
</dbReference>
<dbReference type="InterPro" id="IPR018934">
    <property type="entry name" value="RIO_dom"/>
</dbReference>
<dbReference type="InterPro" id="IPR000687">
    <property type="entry name" value="RIO_kinase"/>
</dbReference>
<dbReference type="InterPro" id="IPR018935">
    <property type="entry name" value="RIO_kinase_CS"/>
</dbReference>
<dbReference type="InterPro" id="IPR017406">
    <property type="entry name" value="Ser/Thr_kinase_Rio3"/>
</dbReference>
<dbReference type="PANTHER" id="PTHR45723">
    <property type="entry name" value="SERINE/THREONINE-PROTEIN KINASE RIO1"/>
    <property type="match status" value="1"/>
</dbReference>
<dbReference type="Pfam" id="PF01163">
    <property type="entry name" value="RIO1"/>
    <property type="match status" value="1"/>
</dbReference>
<dbReference type="PIRSF" id="PIRSF038146">
    <property type="entry name" value="Ser/Thr_PK_RIO3"/>
    <property type="match status" value="1"/>
</dbReference>
<dbReference type="SMART" id="SM00090">
    <property type="entry name" value="RIO"/>
    <property type="match status" value="1"/>
</dbReference>
<dbReference type="SUPFAM" id="SSF56112">
    <property type="entry name" value="Protein kinase-like (PK-like)"/>
    <property type="match status" value="1"/>
</dbReference>
<dbReference type="PROSITE" id="PS01245">
    <property type="entry name" value="RIO1"/>
    <property type="match status" value="1"/>
</dbReference>
<reference key="1">
    <citation type="journal article" date="2005" name="Science">
        <title>The transcriptional landscape of the mammalian genome.</title>
        <authorList>
            <person name="Carninci P."/>
            <person name="Kasukawa T."/>
            <person name="Katayama S."/>
            <person name="Gough J."/>
            <person name="Frith M.C."/>
            <person name="Maeda N."/>
            <person name="Oyama R."/>
            <person name="Ravasi T."/>
            <person name="Lenhard B."/>
            <person name="Wells C."/>
            <person name="Kodzius R."/>
            <person name="Shimokawa K."/>
            <person name="Bajic V.B."/>
            <person name="Brenner S.E."/>
            <person name="Batalov S."/>
            <person name="Forrest A.R."/>
            <person name="Zavolan M."/>
            <person name="Davis M.J."/>
            <person name="Wilming L.G."/>
            <person name="Aidinis V."/>
            <person name="Allen J.E."/>
            <person name="Ambesi-Impiombato A."/>
            <person name="Apweiler R."/>
            <person name="Aturaliya R.N."/>
            <person name="Bailey T.L."/>
            <person name="Bansal M."/>
            <person name="Baxter L."/>
            <person name="Beisel K.W."/>
            <person name="Bersano T."/>
            <person name="Bono H."/>
            <person name="Chalk A.M."/>
            <person name="Chiu K.P."/>
            <person name="Choudhary V."/>
            <person name="Christoffels A."/>
            <person name="Clutterbuck D.R."/>
            <person name="Crowe M.L."/>
            <person name="Dalla E."/>
            <person name="Dalrymple B.P."/>
            <person name="de Bono B."/>
            <person name="Della Gatta G."/>
            <person name="di Bernardo D."/>
            <person name="Down T."/>
            <person name="Engstrom P."/>
            <person name="Fagiolini M."/>
            <person name="Faulkner G."/>
            <person name="Fletcher C.F."/>
            <person name="Fukushima T."/>
            <person name="Furuno M."/>
            <person name="Futaki S."/>
            <person name="Gariboldi M."/>
            <person name="Georgii-Hemming P."/>
            <person name="Gingeras T.R."/>
            <person name="Gojobori T."/>
            <person name="Green R.E."/>
            <person name="Gustincich S."/>
            <person name="Harbers M."/>
            <person name="Hayashi Y."/>
            <person name="Hensch T.K."/>
            <person name="Hirokawa N."/>
            <person name="Hill D."/>
            <person name="Huminiecki L."/>
            <person name="Iacono M."/>
            <person name="Ikeo K."/>
            <person name="Iwama A."/>
            <person name="Ishikawa T."/>
            <person name="Jakt M."/>
            <person name="Kanapin A."/>
            <person name="Katoh M."/>
            <person name="Kawasawa Y."/>
            <person name="Kelso J."/>
            <person name="Kitamura H."/>
            <person name="Kitano H."/>
            <person name="Kollias G."/>
            <person name="Krishnan S.P."/>
            <person name="Kruger A."/>
            <person name="Kummerfeld S.K."/>
            <person name="Kurochkin I.V."/>
            <person name="Lareau L.F."/>
            <person name="Lazarevic D."/>
            <person name="Lipovich L."/>
            <person name="Liu J."/>
            <person name="Liuni S."/>
            <person name="McWilliam S."/>
            <person name="Madan Babu M."/>
            <person name="Madera M."/>
            <person name="Marchionni L."/>
            <person name="Matsuda H."/>
            <person name="Matsuzawa S."/>
            <person name="Miki H."/>
            <person name="Mignone F."/>
            <person name="Miyake S."/>
            <person name="Morris K."/>
            <person name="Mottagui-Tabar S."/>
            <person name="Mulder N."/>
            <person name="Nakano N."/>
            <person name="Nakauchi H."/>
            <person name="Ng P."/>
            <person name="Nilsson R."/>
            <person name="Nishiguchi S."/>
            <person name="Nishikawa S."/>
            <person name="Nori F."/>
            <person name="Ohara O."/>
            <person name="Okazaki Y."/>
            <person name="Orlando V."/>
            <person name="Pang K.C."/>
            <person name="Pavan W.J."/>
            <person name="Pavesi G."/>
            <person name="Pesole G."/>
            <person name="Petrovsky N."/>
            <person name="Piazza S."/>
            <person name="Reed J."/>
            <person name="Reid J.F."/>
            <person name="Ring B.Z."/>
            <person name="Ringwald M."/>
            <person name="Rost B."/>
            <person name="Ruan Y."/>
            <person name="Salzberg S.L."/>
            <person name="Sandelin A."/>
            <person name="Schneider C."/>
            <person name="Schoenbach C."/>
            <person name="Sekiguchi K."/>
            <person name="Semple C.A."/>
            <person name="Seno S."/>
            <person name="Sessa L."/>
            <person name="Sheng Y."/>
            <person name="Shibata Y."/>
            <person name="Shimada H."/>
            <person name="Shimada K."/>
            <person name="Silva D."/>
            <person name="Sinclair B."/>
            <person name="Sperling S."/>
            <person name="Stupka E."/>
            <person name="Sugiura K."/>
            <person name="Sultana R."/>
            <person name="Takenaka Y."/>
            <person name="Taki K."/>
            <person name="Tammoja K."/>
            <person name="Tan S.L."/>
            <person name="Tang S."/>
            <person name="Taylor M.S."/>
            <person name="Tegner J."/>
            <person name="Teichmann S.A."/>
            <person name="Ueda H.R."/>
            <person name="van Nimwegen E."/>
            <person name="Verardo R."/>
            <person name="Wei C.L."/>
            <person name="Yagi K."/>
            <person name="Yamanishi H."/>
            <person name="Zabarovsky E."/>
            <person name="Zhu S."/>
            <person name="Zimmer A."/>
            <person name="Hide W."/>
            <person name="Bult C."/>
            <person name="Grimmond S.M."/>
            <person name="Teasdale R.D."/>
            <person name="Liu E.T."/>
            <person name="Brusic V."/>
            <person name="Quackenbush J."/>
            <person name="Wahlestedt C."/>
            <person name="Mattick J.S."/>
            <person name="Hume D.A."/>
            <person name="Kai C."/>
            <person name="Sasaki D."/>
            <person name="Tomaru Y."/>
            <person name="Fukuda S."/>
            <person name="Kanamori-Katayama M."/>
            <person name="Suzuki M."/>
            <person name="Aoki J."/>
            <person name="Arakawa T."/>
            <person name="Iida J."/>
            <person name="Imamura K."/>
            <person name="Itoh M."/>
            <person name="Kato T."/>
            <person name="Kawaji H."/>
            <person name="Kawagashira N."/>
            <person name="Kawashima T."/>
            <person name="Kojima M."/>
            <person name="Kondo S."/>
            <person name="Konno H."/>
            <person name="Nakano K."/>
            <person name="Ninomiya N."/>
            <person name="Nishio T."/>
            <person name="Okada M."/>
            <person name="Plessy C."/>
            <person name="Shibata K."/>
            <person name="Shiraki T."/>
            <person name="Suzuki S."/>
            <person name="Tagami M."/>
            <person name="Waki K."/>
            <person name="Watahiki A."/>
            <person name="Okamura-Oho Y."/>
            <person name="Suzuki H."/>
            <person name="Kawai J."/>
            <person name="Hayashizaki Y."/>
        </authorList>
    </citation>
    <scope>NUCLEOTIDE SEQUENCE [LARGE SCALE MRNA]</scope>
    <source>
        <strain>C57BL/6J</strain>
        <tissue>Amnion</tissue>
        <tissue>Lung</tissue>
    </source>
</reference>
<reference key="2">
    <citation type="submission" date="2005-07" db="EMBL/GenBank/DDBJ databases">
        <authorList>
            <person name="Mural R.J."/>
            <person name="Adams M.D."/>
            <person name="Myers E.W."/>
            <person name="Smith H.O."/>
            <person name="Venter J.C."/>
        </authorList>
    </citation>
    <scope>NUCLEOTIDE SEQUENCE [LARGE SCALE GENOMIC DNA]</scope>
</reference>
<reference key="3">
    <citation type="journal article" date="2004" name="Genome Res.">
        <title>The status, quality, and expansion of the NIH full-length cDNA project: the Mammalian Gene Collection (MGC).</title>
        <authorList>
            <consortium name="The MGC Project Team"/>
        </authorList>
    </citation>
    <scope>NUCLEOTIDE SEQUENCE [LARGE SCALE MRNA]</scope>
    <source>
        <strain>Czech II</strain>
        <tissue>Mammary tumor</tissue>
    </source>
</reference>
<reference key="4">
    <citation type="journal article" date="2008" name="J. Proteome Res.">
        <title>Specific phosphopeptide enrichment with immobilized titanium ion affinity chromatography adsorbent for phosphoproteome analysis.</title>
        <authorList>
            <person name="Zhou H."/>
            <person name="Ye M."/>
            <person name="Dong J."/>
            <person name="Han G."/>
            <person name="Jiang X."/>
            <person name="Wu R."/>
            <person name="Zou H."/>
        </authorList>
    </citation>
    <scope>PHOSPHORYLATION [LARGE SCALE ANALYSIS] AT SER-125; SER-127 AND SER-128</scope>
    <scope>IDENTIFICATION BY MASS SPECTROMETRY [LARGE SCALE ANALYSIS]</scope>
    <source>
        <tissue>Liver</tissue>
    </source>
</reference>
<reference key="5">
    <citation type="journal article" date="2010" name="Cell">
        <title>A tissue-specific atlas of mouse protein phosphorylation and expression.</title>
        <authorList>
            <person name="Huttlin E.L."/>
            <person name="Jedrychowski M.P."/>
            <person name="Elias J.E."/>
            <person name="Goswami T."/>
            <person name="Rad R."/>
            <person name="Beausoleil S.A."/>
            <person name="Villen J."/>
            <person name="Haas W."/>
            <person name="Sowa M.E."/>
            <person name="Gygi S.P."/>
        </authorList>
    </citation>
    <scope>PHOSPHORYLATION [LARGE SCALE ANALYSIS] AT SER-125; SER-127; SER-128 AND SER-512</scope>
    <scope>IDENTIFICATION BY MASS SPECTROMETRY [LARGE SCALE ANALYSIS]</scope>
    <source>
        <tissue>Liver</tissue>
        <tissue>Pancreas</tissue>
        <tissue>Spleen</tissue>
        <tissue>Testis</tissue>
    </source>
</reference>
<feature type="chain" id="PRO_0000213530" description="Serine/threonine-protein kinase RIO3">
    <location>
        <begin position="1"/>
        <end position="519"/>
    </location>
</feature>
<feature type="domain" description="Protein kinase">
    <location>
        <begin position="251"/>
        <end position="519"/>
    </location>
</feature>
<feature type="region of interest" description="Disordered" evidence="3">
    <location>
        <begin position="122"/>
        <end position="159"/>
    </location>
</feature>
<feature type="compositionally biased region" description="Acidic residues" evidence="3">
    <location>
        <begin position="124"/>
        <end position="134"/>
    </location>
</feature>
<feature type="active site" description="Proton acceptor" evidence="1">
    <location>
        <position position="406"/>
    </location>
</feature>
<feature type="binding site" evidence="1">
    <location>
        <begin position="257"/>
        <end position="265"/>
    </location>
    <ligand>
        <name>ATP</name>
        <dbReference type="ChEBI" id="CHEBI:30616"/>
    </ligand>
</feature>
<feature type="binding site" evidence="1">
    <location>
        <position position="290"/>
    </location>
    <ligand>
        <name>ATP</name>
        <dbReference type="ChEBI" id="CHEBI:30616"/>
    </ligand>
</feature>
<feature type="modified residue" description="Phosphoserine" evidence="2">
    <location>
        <position position="8"/>
    </location>
</feature>
<feature type="modified residue" description="Phosphoserine" evidence="2">
    <location>
        <position position="112"/>
    </location>
</feature>
<feature type="modified residue" description="Phosphoserine" evidence="5 6">
    <location>
        <position position="125"/>
    </location>
</feature>
<feature type="modified residue" description="Phosphoserine" evidence="5 6">
    <location>
        <position position="127"/>
    </location>
</feature>
<feature type="modified residue" description="Phosphoserine" evidence="5 6">
    <location>
        <position position="128"/>
    </location>
</feature>
<feature type="modified residue" description="Phosphoserine" evidence="6">
    <location>
        <position position="512"/>
    </location>
</feature>
<feature type="sequence conflict" description="In Ref. 1; BAB23529." evidence="4" ref="1">
    <original>P</original>
    <variation>T</variation>
    <location>
        <position position="141"/>
    </location>
</feature>
<feature type="sequence conflict" description="In Ref. 3; AAH33271." evidence="4" ref="3">
    <original>I</original>
    <variation>V</variation>
    <location>
        <position position="496"/>
    </location>
</feature>
<organism>
    <name type="scientific">Mus musculus</name>
    <name type="common">Mouse</name>
    <dbReference type="NCBI Taxonomy" id="10090"/>
    <lineage>
        <taxon>Eukaryota</taxon>
        <taxon>Metazoa</taxon>
        <taxon>Chordata</taxon>
        <taxon>Craniata</taxon>
        <taxon>Vertebrata</taxon>
        <taxon>Euteleostomi</taxon>
        <taxon>Mammalia</taxon>
        <taxon>Eutheria</taxon>
        <taxon>Euarchontoglires</taxon>
        <taxon>Glires</taxon>
        <taxon>Rodentia</taxon>
        <taxon>Myomorpha</taxon>
        <taxon>Muroidea</taxon>
        <taxon>Muridae</taxon>
        <taxon>Murinae</taxon>
        <taxon>Mus</taxon>
        <taxon>Mus</taxon>
    </lineage>
</organism>
<accession>Q9DBU3</accession>
<accession>Q3UI51</accession>
<accession>Q8CIC1</accession>
<gene>
    <name type="primary">Riok3</name>
</gene>
<keyword id="KW-0051">Antiviral defense</keyword>
<keyword id="KW-0067">ATP-binding</keyword>
<keyword id="KW-0963">Cytoplasm</keyword>
<keyword id="KW-0391">Immunity</keyword>
<keyword id="KW-0399">Innate immunity</keyword>
<keyword id="KW-0418">Kinase</keyword>
<keyword id="KW-0460">Magnesium</keyword>
<keyword id="KW-0479">Metal-binding</keyword>
<keyword id="KW-0547">Nucleotide-binding</keyword>
<keyword id="KW-0597">Phosphoprotein</keyword>
<keyword id="KW-1185">Reference proteome</keyword>
<keyword id="KW-0690">Ribosome biogenesis</keyword>
<keyword id="KW-0723">Serine/threonine-protein kinase</keyword>
<keyword id="KW-0808">Transferase</keyword>
<sequence>MDLVGVSSPEPGPAAAWGPSKCPWATPQNTVSCSLTEVMSEELAKELQLEEEAAAFPEVVVAEGPFISGENIDTSSDLMLAQMLQMEFDREYDAQLRREEKKFNGDSKVSISFENYRKVHPFEDSDSSEDEVDWQDTRDDPYRPAKPIPTPKKGFIGKGKDITTKHDEVVCGRKNTARMENFAPGFQVGDGIGMDLKLSNHVFNALKQHAYSEERRSARLHEKKEHSTAEKAVDPKTRLLMYKMVNSGMLETITGCISTGKESVVFHAYGGSLEDEKEDGKAIPTECAIKVFKTTLNEFKNRDKYIKDDFRFKDRFSKLNPRKIIRMWAEKEMHNLTRMQKAGIPCPTVVLLKKHILVMSFIGHDQVPAPKLKEVKLSNEEMKDAYYQTLHLMQQLYNECTLVHADLSEYNMLWHAGKVWLIDVSQSVEPTHPHGLEFLFRDCRNVSQFFQKGGVTEALNERELFNAVSGLNISADNEADFLAEIEALEKMNEDHIQKNGRKAASFLKDDGSPPVLSAD</sequence>